<protein>
    <recommendedName>
        <fullName evidence="4">U-scoloptoxin(04)-Ssd2a</fullName>
        <shortName evidence="4">U-SLPTX(04)-Ssd2a</shortName>
    </recommendedName>
    <alternativeName>
        <fullName evidence="2">Toxin SSD416</fullName>
    </alternativeName>
</protein>
<sequence>MKAIYILSVLLLMMLPILSRFATSEGAAQHVEPIQKIRVEQNDCTRGIRCPRGHYCDPGLRQCLPR</sequence>
<comment type="subcellular location">
    <subcellularLocation>
        <location evidence="4">Secreted</location>
    </subcellularLocation>
</comment>
<comment type="tissue specificity">
    <text evidence="4">Expressed by the venom gland.</text>
</comment>
<comment type="PTM">
    <text evidence="3">Contains 2 disulfide bonds.</text>
</comment>
<comment type="similarity">
    <text evidence="3">Belongs to the scoloptoxin-04 family.</text>
</comment>
<reference key="1">
    <citation type="journal article" date="2012" name="J. Proteome Res.">
        <title>Venomic and transcriptomic analysis of centipede Scolopendra subspinipes dehaani.</title>
        <authorList>
            <person name="Liu Z.C."/>
            <person name="Zhang R."/>
            <person name="Zhao F."/>
            <person name="Chen Z.M."/>
            <person name="Liu H.W."/>
            <person name="Wang Y.J."/>
            <person name="Jiang P."/>
            <person name="Zhang Y."/>
            <person name="Wu Y."/>
            <person name="Ding J.P."/>
            <person name="Lee W.H."/>
            <person name="Zhang Y."/>
        </authorList>
    </citation>
    <scope>NUCLEOTIDE SEQUENCE [MRNA]</scope>
    <source>
        <tissue>Venom gland</tissue>
    </source>
</reference>
<reference key="2">
    <citation type="journal article" date="2014" name="Mol. Biol. Evol.">
        <title>Clawing through evolution: toxin diversification and convergence in the ancient lineage Chilopoda (centipedes).</title>
        <authorList>
            <person name="Undheim E.A."/>
            <person name="Jones A."/>
            <person name="Clauser K.R."/>
            <person name="Holland J.W."/>
            <person name="Pineda S.S."/>
            <person name="King G.F."/>
            <person name="Fry B.G."/>
        </authorList>
    </citation>
    <scope>NOMENCLATURE</scope>
</reference>
<evidence type="ECO:0000255" key="1"/>
<evidence type="ECO:0000303" key="2">
    <source>
    </source>
</evidence>
<evidence type="ECO:0000305" key="3"/>
<evidence type="ECO:0000305" key="4">
    <source>
    </source>
</evidence>
<organism>
    <name type="scientific">Scolopendra dehaani</name>
    <name type="common">Thai centipede</name>
    <name type="synonym">Scolopendra subspinipes dehaani</name>
    <dbReference type="NCBI Taxonomy" id="2609776"/>
    <lineage>
        <taxon>Eukaryota</taxon>
        <taxon>Metazoa</taxon>
        <taxon>Ecdysozoa</taxon>
        <taxon>Arthropoda</taxon>
        <taxon>Myriapoda</taxon>
        <taxon>Chilopoda</taxon>
        <taxon>Pleurostigmophora</taxon>
        <taxon>Scolopendromorpha</taxon>
        <taxon>Scolopendridae</taxon>
        <taxon>Scolopendra</taxon>
    </lineage>
</organism>
<accession>P0DPX1</accession>
<name>TX42A_SCODE</name>
<dbReference type="EMBL" id="KC144415">
    <property type="status" value="NOT_ANNOTATED_CDS"/>
    <property type="molecule type" value="mRNA"/>
</dbReference>
<dbReference type="SMR" id="P0DPX1"/>
<dbReference type="GO" id="GO:0005576">
    <property type="term" value="C:extracellular region"/>
    <property type="evidence" value="ECO:0007669"/>
    <property type="project" value="UniProtKB-SubCell"/>
</dbReference>
<dbReference type="GO" id="GO:0090729">
    <property type="term" value="F:toxin activity"/>
    <property type="evidence" value="ECO:0007669"/>
    <property type="project" value="UniProtKB-KW"/>
</dbReference>
<keyword id="KW-1015">Disulfide bond</keyword>
<keyword id="KW-0964">Secreted</keyword>
<keyword id="KW-0732">Signal</keyword>
<keyword id="KW-0800">Toxin</keyword>
<proteinExistence type="inferred from homology"/>
<feature type="signal peptide" evidence="1">
    <location>
        <begin position="1"/>
        <end position="19"/>
    </location>
</feature>
<feature type="chain" id="PRO_0000446716" description="U-scoloptoxin(04)-Ssd2a" evidence="3">
    <location>
        <begin position="20"/>
        <end position="66"/>
    </location>
</feature>